<name>PAT06_SOLTU</name>
<comment type="function">
    <text evidence="1">Probable lipolytic acyl hydrolase (LAH), an activity which is thought to be involved in the response of tubers to pathogens.</text>
</comment>
<comment type="subcellular location">
    <subcellularLocation>
        <location evidence="1">Vacuole</location>
    </subcellularLocation>
</comment>
<comment type="tissue specificity">
    <text evidence="4">Tuber.</text>
</comment>
<comment type="developmental stage">
    <text evidence="4">Accumulates progressively during tuber formation from stolon.</text>
</comment>
<comment type="domain">
    <text>The nitrogen atoms of the two glycine residues in the GGXR motif define the oxyanion hole, and stabilize the oxyanion that forms during the nucleophilic attack by the catalytic serine during substrate cleavage.</text>
</comment>
<comment type="miscellaneous">
    <text>Patatin have a dual role as a somatic storage protein and as an enzyme involved in host resistance.</text>
</comment>
<comment type="similarity">
    <text evidence="5">Belongs to the patatin family.</text>
</comment>
<keyword id="KW-0175">Coiled coil</keyword>
<keyword id="KW-0325">Glycoprotein</keyword>
<keyword id="KW-0378">Hydrolase</keyword>
<keyword id="KW-0442">Lipid degradation</keyword>
<keyword id="KW-0443">Lipid metabolism</keyword>
<keyword id="KW-0611">Plant defense</keyword>
<keyword id="KW-1185">Reference proteome</keyword>
<keyword id="KW-0732">Signal</keyword>
<keyword id="KW-0758">Storage protein</keyword>
<keyword id="KW-0926">Vacuole</keyword>
<evidence type="ECO:0000250" key="1"/>
<evidence type="ECO:0000255" key="2"/>
<evidence type="ECO:0000255" key="3">
    <source>
        <dbReference type="PROSITE-ProRule" id="PRU01161"/>
    </source>
</evidence>
<evidence type="ECO:0000269" key="4">
    <source>
    </source>
</evidence>
<evidence type="ECO:0000305" key="5"/>
<dbReference type="EC" id="3.1.1.-"/>
<dbReference type="EMBL" id="DQ274493">
    <property type="protein sequence ID" value="ABC55693.1"/>
    <property type="molecule type" value="mRNA"/>
</dbReference>
<dbReference type="SMR" id="Q2MY45"/>
<dbReference type="Allergome" id="639">
    <property type="allergen name" value="Sola t 1"/>
</dbReference>
<dbReference type="InParanoid" id="Q2MY45"/>
<dbReference type="Proteomes" id="UP000011115">
    <property type="component" value="Unassembled WGS sequence"/>
</dbReference>
<dbReference type="ExpressionAtlas" id="Q2MY45">
    <property type="expression patterns" value="baseline"/>
</dbReference>
<dbReference type="GO" id="GO:0005773">
    <property type="term" value="C:vacuole"/>
    <property type="evidence" value="ECO:0007669"/>
    <property type="project" value="UniProtKB-SubCell"/>
</dbReference>
<dbReference type="GO" id="GO:0047372">
    <property type="term" value="F:monoacylglycerol lipase activity"/>
    <property type="evidence" value="ECO:0000318"/>
    <property type="project" value="GO_Central"/>
</dbReference>
<dbReference type="GO" id="GO:0045735">
    <property type="term" value="F:nutrient reservoir activity"/>
    <property type="evidence" value="ECO:0007669"/>
    <property type="project" value="UniProtKB-KW"/>
</dbReference>
<dbReference type="GO" id="GO:0004620">
    <property type="term" value="F:phospholipase activity"/>
    <property type="evidence" value="ECO:0000318"/>
    <property type="project" value="GO_Central"/>
</dbReference>
<dbReference type="GO" id="GO:0006952">
    <property type="term" value="P:defense response"/>
    <property type="evidence" value="ECO:0007669"/>
    <property type="project" value="UniProtKB-KW"/>
</dbReference>
<dbReference type="GO" id="GO:0016042">
    <property type="term" value="P:lipid catabolic process"/>
    <property type="evidence" value="ECO:0007669"/>
    <property type="project" value="UniProtKB-KW"/>
</dbReference>
<dbReference type="Gene3D" id="3.40.1090.10">
    <property type="entry name" value="Cytosolic phospholipase A2 catalytic domain"/>
    <property type="match status" value="1"/>
</dbReference>
<dbReference type="InterPro" id="IPR016035">
    <property type="entry name" value="Acyl_Trfase/lysoPLipase"/>
</dbReference>
<dbReference type="InterPro" id="IPR002641">
    <property type="entry name" value="PNPLA_dom"/>
</dbReference>
<dbReference type="PANTHER" id="PTHR32176:SF85">
    <property type="entry name" value="PATATIN GROUP D-2"/>
    <property type="match status" value="1"/>
</dbReference>
<dbReference type="PANTHER" id="PTHR32176">
    <property type="entry name" value="XYLOSE ISOMERASE"/>
    <property type="match status" value="1"/>
</dbReference>
<dbReference type="Pfam" id="PF01734">
    <property type="entry name" value="Patatin"/>
    <property type="match status" value="1"/>
</dbReference>
<dbReference type="SUPFAM" id="SSF52151">
    <property type="entry name" value="FabD/lysophospholipase-like"/>
    <property type="match status" value="1"/>
</dbReference>
<dbReference type="PROSITE" id="PS51635">
    <property type="entry name" value="PNPLA"/>
    <property type="match status" value="1"/>
</dbReference>
<feature type="signal peptide" evidence="2">
    <location>
        <begin position="1"/>
        <end position="23"/>
    </location>
</feature>
<feature type="chain" id="PRO_0000296692" description="Patatin-06">
    <location>
        <begin position="24"/>
        <end position="386"/>
    </location>
</feature>
<feature type="domain" description="PNPLA" evidence="3">
    <location>
        <begin position="32"/>
        <end position="229"/>
    </location>
</feature>
<feature type="coiled-coil region" evidence="2">
    <location>
        <begin position="321"/>
        <end position="384"/>
    </location>
</feature>
<feature type="short sequence motif" description="GXGXXG" evidence="3">
    <location>
        <begin position="36"/>
        <end position="41"/>
    </location>
</feature>
<feature type="short sequence motif" description="GXSXG" evidence="3">
    <location>
        <begin position="75"/>
        <end position="79"/>
    </location>
</feature>
<feature type="short sequence motif" description="DGA/G" evidence="3">
    <location>
        <begin position="215"/>
        <end position="217"/>
    </location>
</feature>
<feature type="active site" description="Nucleophile" evidence="3">
    <location>
        <position position="77"/>
    </location>
</feature>
<feature type="active site" description="Proton acceptor" evidence="3">
    <location>
        <position position="215"/>
    </location>
</feature>
<feature type="glycosylation site" description="N-linked (GlcNAc...) asparagine" evidence="2">
    <location>
        <position position="115"/>
    </location>
</feature>
<accession>Q2MY45</accession>
<protein>
    <recommendedName>
        <fullName>Patatin-06</fullName>
        <ecNumber>3.1.1.-</ecNumber>
    </recommendedName>
</protein>
<sequence>MATTKSFLILFFMILATTSSTCAKLEEMVTVLSIDGGGIKGIIPAIILEFLEGQLQEVDNNKDARLADYFDVIGGTSTGGLLTAMITTPNENNRPFAAAKDIVPFYFEHGPHIFNYSGSIFGPRYDGKYLLQVLQEKLGETRVHQALTEVAISSFDIKTNKPVIFTKSNLAKSPELDAKMYDICYSTAAAPIYFPPHHFVTHTSNGATYEFNLVDGGVATVGDPALLSLSVATRLAQEDPAFSSIKSLDYKQMLLLSLGTGTNSEFDKTYTAEEAAKWGPLRWMLAIQQMTNAASSYMTDYYISTVFQARHSQNNYLRVQENALTGTTTEMDDASEANMELLVQVGETLLKKPVSKDSPETYEEALKRFAKLLSNRKKLRANKASY</sequence>
<proteinExistence type="evidence at transcript level"/>
<reference key="1">
    <citation type="journal article" date="2006" name="Genetics">
        <title>Structural diversity and differential transcription of the patatin multicopy gene family during potato tuber development.</title>
        <authorList>
            <person name="Stupar R.M."/>
            <person name="Beaubien K.A."/>
            <person name="Jin W."/>
            <person name="Song J."/>
            <person name="Lee M.-K."/>
            <person name="Wu C."/>
            <person name="Zhang H.-B."/>
            <person name="Han B."/>
            <person name="Jiang J."/>
        </authorList>
    </citation>
    <scope>NUCLEOTIDE SEQUENCE [MRNA]</scope>
    <scope>DEVELOPMENTAL STAGE</scope>
    <scope>TISSUE SPECIFICITY</scope>
    <source>
        <strain>cv. Kennebec</strain>
    </source>
</reference>
<organism>
    <name type="scientific">Solanum tuberosum</name>
    <name type="common">Potato</name>
    <dbReference type="NCBI Taxonomy" id="4113"/>
    <lineage>
        <taxon>Eukaryota</taxon>
        <taxon>Viridiplantae</taxon>
        <taxon>Streptophyta</taxon>
        <taxon>Embryophyta</taxon>
        <taxon>Tracheophyta</taxon>
        <taxon>Spermatophyta</taxon>
        <taxon>Magnoliopsida</taxon>
        <taxon>eudicotyledons</taxon>
        <taxon>Gunneridae</taxon>
        <taxon>Pentapetalae</taxon>
        <taxon>asterids</taxon>
        <taxon>lamiids</taxon>
        <taxon>Solanales</taxon>
        <taxon>Solanaceae</taxon>
        <taxon>Solanoideae</taxon>
        <taxon>Solaneae</taxon>
        <taxon>Solanum</taxon>
    </lineage>
</organism>